<proteinExistence type="predicted"/>
<sequence>MCNLLVAEQCCRICELRNGWYTENYTESVPTTLANNAFYGSVENGKISSALRAELAEAAADYAVALVQVGLGEGFAGLIAQWDMDTSNGALTCCLKRVWYLVIKNLHLS</sequence>
<keyword id="KW-1185">Reference proteome</keyword>
<protein>
    <recommendedName>
        <fullName>Uncharacterized protein HI_0742</fullName>
    </recommendedName>
</protein>
<reference key="1">
    <citation type="journal article" date="1995" name="Science">
        <title>Whole-genome random sequencing and assembly of Haemophilus influenzae Rd.</title>
        <authorList>
            <person name="Fleischmann R.D."/>
            <person name="Adams M.D."/>
            <person name="White O."/>
            <person name="Clayton R.A."/>
            <person name="Kirkness E.F."/>
            <person name="Kerlavage A.R."/>
            <person name="Bult C.J."/>
            <person name="Tomb J.-F."/>
            <person name="Dougherty B.A."/>
            <person name="Merrick J.M."/>
            <person name="McKenney K."/>
            <person name="Sutton G.G."/>
            <person name="FitzHugh W."/>
            <person name="Fields C.A."/>
            <person name="Gocayne J.D."/>
            <person name="Scott J.D."/>
            <person name="Shirley R."/>
            <person name="Liu L.-I."/>
            <person name="Glodek A."/>
            <person name="Kelley J.M."/>
            <person name="Weidman J.F."/>
            <person name="Phillips C.A."/>
            <person name="Spriggs T."/>
            <person name="Hedblom E."/>
            <person name="Cotton M.D."/>
            <person name="Utterback T.R."/>
            <person name="Hanna M.C."/>
            <person name="Nguyen D.T."/>
            <person name="Saudek D.M."/>
            <person name="Brandon R.C."/>
            <person name="Fine L.D."/>
            <person name="Fritchman J.L."/>
            <person name="Fuhrmann J.L."/>
            <person name="Geoghagen N.S.M."/>
            <person name="Gnehm C.L."/>
            <person name="McDonald L.A."/>
            <person name="Small K.V."/>
            <person name="Fraser C.M."/>
            <person name="Smith H.O."/>
            <person name="Venter J.C."/>
        </authorList>
    </citation>
    <scope>NUCLEOTIDE SEQUENCE [LARGE SCALE GENOMIC DNA]</scope>
    <source>
        <strain>ATCC 51907 / DSM 11121 / KW20 / Rd</strain>
    </source>
</reference>
<feature type="chain" id="PRO_0000077953" description="Uncharacterized protein HI_0742">
    <location>
        <begin position="1"/>
        <end position="109"/>
    </location>
</feature>
<evidence type="ECO:0000305" key="1"/>
<gene>
    <name type="ordered locus">HI_0742</name>
</gene>
<organism>
    <name type="scientific">Haemophilus influenzae (strain ATCC 51907 / DSM 11121 / KW20 / Rd)</name>
    <dbReference type="NCBI Taxonomy" id="71421"/>
    <lineage>
        <taxon>Bacteria</taxon>
        <taxon>Pseudomonadati</taxon>
        <taxon>Pseudomonadota</taxon>
        <taxon>Gammaproteobacteria</taxon>
        <taxon>Pasteurellales</taxon>
        <taxon>Pasteurellaceae</taxon>
        <taxon>Haemophilus</taxon>
    </lineage>
</organism>
<comment type="similarity">
    <text evidence="1">To E.coli YtfG C-terminal region.</text>
</comment>
<accession>P44047</accession>
<dbReference type="EMBL" id="L42023">
    <property type="protein sequence ID" value="AAC22407.1"/>
    <property type="molecule type" value="Genomic_DNA"/>
</dbReference>
<dbReference type="PIR" id="B64013">
    <property type="entry name" value="B64013"/>
</dbReference>
<dbReference type="RefSeq" id="NP_438901.1">
    <property type="nucleotide sequence ID" value="NC_000907.1"/>
</dbReference>
<dbReference type="STRING" id="71421.HI_0742"/>
<dbReference type="EnsemblBacteria" id="AAC22407">
    <property type="protein sequence ID" value="AAC22407"/>
    <property type="gene ID" value="HI_0742"/>
</dbReference>
<dbReference type="KEGG" id="hin:HI_0742"/>
<dbReference type="PATRIC" id="fig|71421.8.peg.778"/>
<dbReference type="eggNOG" id="COG0702">
    <property type="taxonomic scope" value="Bacteria"/>
</dbReference>
<dbReference type="HOGENOM" id="CLU_2180143_0_0_6"/>
<dbReference type="OrthoDB" id="5510591at2"/>
<dbReference type="BioCyc" id="HINF71421:G1GJ1-780-MONOMER"/>
<dbReference type="Proteomes" id="UP000000579">
    <property type="component" value="Chromosome"/>
</dbReference>
<dbReference type="Gene3D" id="3.90.25.10">
    <property type="entry name" value="UDP-galactose 4-epimerase, domain 1"/>
    <property type="match status" value="1"/>
</dbReference>
<dbReference type="InterPro" id="IPR052718">
    <property type="entry name" value="NmrA-type_oxidoreductase"/>
</dbReference>
<dbReference type="PANTHER" id="PTHR47129:SF1">
    <property type="entry name" value="NMRA-LIKE DOMAIN-CONTAINING PROTEIN"/>
    <property type="match status" value="1"/>
</dbReference>
<dbReference type="PANTHER" id="PTHR47129">
    <property type="entry name" value="QUINONE OXIDOREDUCTASE 2"/>
    <property type="match status" value="1"/>
</dbReference>
<name>Y742_HAEIN</name>